<sequence length="92" mass="10168">MKLCVSALSLLLLVAAFCAPGFSAPMGSDPPTSCCFSYTSRQLHRSFVMDYYETSSLCSKPAVVFLTKRGRQICANPSEPWVTEYMSDLELN</sequence>
<evidence type="ECO:0000250" key="1"/>
<evidence type="ECO:0000305" key="2"/>
<feature type="signal peptide">
    <location>
        <begin position="1"/>
        <end position="23"/>
    </location>
</feature>
<feature type="chain" id="PRO_0000005166" description="C-C motif chemokine 4">
    <location>
        <begin position="24"/>
        <end position="92"/>
    </location>
</feature>
<feature type="disulfide bond" evidence="1">
    <location>
        <begin position="34"/>
        <end position="58"/>
    </location>
</feature>
<feature type="disulfide bond" evidence="1">
    <location>
        <begin position="35"/>
        <end position="74"/>
    </location>
</feature>
<name>CCL4_MOUSE</name>
<reference key="1">
    <citation type="journal article" date="1988" name="J. Exp. Med.">
        <title>Resolution of the two components of macrophage inflammatory protein 1, and cloning and characterization of one of those components, macrophage inflammatory protein 1 beta.</title>
        <authorList>
            <person name="Sherry B."/>
            <person name="Tekamp-Olson P."/>
            <person name="Gallegos C."/>
            <person name="Bauer D."/>
            <person name="Davatelis G."/>
            <person name="Wolpe S.D."/>
            <person name="Masiarz F."/>
            <person name="Coit D."/>
            <person name="Cerami A."/>
        </authorList>
    </citation>
    <scope>NUCLEOTIDE SEQUENCE [MRNA]</scope>
    <source>
        <tissue>Macrophage</tissue>
    </source>
</reference>
<reference key="2">
    <citation type="journal article" date="1989" name="J. Immunol.">
        <title>A family of small inducible proteins secreted by leukocytes are members of a new superfamily that includes leukocyte and fibroblast-derived inflammatory agents, growth factors, and indicators of various activation processes.</title>
        <authorList>
            <person name="Brown K.D."/>
            <person name="Zurawski S.M."/>
            <person name="Mosmann T.R."/>
            <person name="Zurawski G."/>
        </authorList>
    </citation>
    <scope>NUCLEOTIDE SEQUENCE [MRNA]</scope>
    <source>
        <tissue>Helper T-cell</tissue>
    </source>
</reference>
<reference key="3">
    <citation type="submission" date="1991-10" db="EMBL/GenBank/DDBJ databases">
        <title>Sequence of the murine macrophage inflammatory protein 1b gene.</title>
        <authorList>
            <person name="Daubersies P."/>
            <person name="Lepretre F."/>
            <person name="Bailleul B."/>
            <person name="Grove M."/>
            <person name="Pragnell I."/>
            <person name="Plumb M.A."/>
        </authorList>
    </citation>
    <scope>NUCLEOTIDE SEQUENCE [GENOMIC DNA]</scope>
    <source>
        <strain>DBA/2J</strain>
        <tissue>Liver</tissue>
    </source>
</reference>
<reference key="4">
    <citation type="journal article" date="1999" name="J. Immunol.">
        <title>Sequence polymorphisms in the chemokines Scya1 (TCA-3), Scya2 (monocyte chemoattractant protein (MCP)-1), and Scya12 (MCP-5) are candidates for eae7, a locus controlling susceptibility to monophasic remitting/nonrelapsing experimental allergic encephalomyelitis.</title>
        <authorList>
            <person name="Teuscher C."/>
            <person name="Butterfield R.J."/>
            <person name="Ma R.Z."/>
            <person name="Zachary J.F."/>
            <person name="Doerge R.W."/>
            <person name="Blankenhorn E.P."/>
        </authorList>
    </citation>
    <scope>NUCLEOTIDE SEQUENCE [MRNA]</scope>
    <source>
        <strain>B10.S/J</strain>
        <strain>SJL/J</strain>
        <tissue>Spleen</tissue>
    </source>
</reference>
<gene>
    <name type="primary">Ccl4</name>
    <name type="synonym">Mip1b</name>
    <name type="synonym">Scya4</name>
</gene>
<protein>
    <recommendedName>
        <fullName>C-C motif chemokine 4</fullName>
    </recommendedName>
    <alternativeName>
        <fullName>Immune activation protein 2</fullName>
        <shortName>ACT-2</shortName>
        <shortName>ACT2</shortName>
    </alternativeName>
    <alternativeName>
        <fullName>Macrophage inflammatory protein 1-beta</fullName>
        <shortName>MIP-1-beta</shortName>
    </alternativeName>
    <alternativeName>
        <fullName>Protein H400</fullName>
    </alternativeName>
    <alternativeName>
        <fullName>SIS-gamma</fullName>
    </alternativeName>
    <alternativeName>
        <fullName>Small-inducible cytokine A4</fullName>
    </alternativeName>
</protein>
<organism>
    <name type="scientific">Mus musculus</name>
    <name type="common">Mouse</name>
    <dbReference type="NCBI Taxonomy" id="10090"/>
    <lineage>
        <taxon>Eukaryota</taxon>
        <taxon>Metazoa</taxon>
        <taxon>Chordata</taxon>
        <taxon>Craniata</taxon>
        <taxon>Vertebrata</taxon>
        <taxon>Euteleostomi</taxon>
        <taxon>Mammalia</taxon>
        <taxon>Eutheria</taxon>
        <taxon>Euarchontoglires</taxon>
        <taxon>Glires</taxon>
        <taxon>Rodentia</taxon>
        <taxon>Myomorpha</taxon>
        <taxon>Muroidea</taxon>
        <taxon>Muridae</taxon>
        <taxon>Murinae</taxon>
        <taxon>Mus</taxon>
        <taxon>Mus</taxon>
    </lineage>
</organism>
<proteinExistence type="inferred from homology"/>
<dbReference type="EMBL" id="M35590">
    <property type="protein sequence ID" value="AAA39708.1"/>
    <property type="molecule type" value="mRNA"/>
</dbReference>
<dbReference type="EMBL" id="M23503">
    <property type="protein sequence ID" value="AAA40148.1"/>
    <property type="molecule type" value="mRNA"/>
</dbReference>
<dbReference type="EMBL" id="X62502">
    <property type="protein sequence ID" value="CAA44364.1"/>
    <property type="molecule type" value="Genomic_DNA"/>
</dbReference>
<dbReference type="EMBL" id="AF128218">
    <property type="protein sequence ID" value="AAF22559.1"/>
    <property type="molecule type" value="mRNA"/>
</dbReference>
<dbReference type="EMBL" id="AF128219">
    <property type="protein sequence ID" value="AAF22560.1"/>
    <property type="molecule type" value="mRNA"/>
</dbReference>
<dbReference type="CCDS" id="CCDS36256.1"/>
<dbReference type="PIR" id="C30552">
    <property type="entry name" value="C30552"/>
</dbReference>
<dbReference type="RefSeq" id="NP_038680.1">
    <property type="nucleotide sequence ID" value="NM_013652.2"/>
</dbReference>
<dbReference type="RefSeq" id="XP_011247134.1">
    <property type="nucleotide sequence ID" value="XM_011248832.1"/>
</dbReference>
<dbReference type="SMR" id="P14097"/>
<dbReference type="FunCoup" id="P14097">
    <property type="interactions" value="1025"/>
</dbReference>
<dbReference type="STRING" id="10090.ENSMUSP00000019074"/>
<dbReference type="PaxDb" id="10090-ENSMUSP00000019074"/>
<dbReference type="PeptideAtlas" id="P14097"/>
<dbReference type="ProteomicsDB" id="281332"/>
<dbReference type="DNASU" id="20303"/>
<dbReference type="Ensembl" id="ENSMUST00000019074.4">
    <property type="protein sequence ID" value="ENSMUSP00000019074.4"/>
    <property type="gene ID" value="ENSMUSG00000018930.4"/>
</dbReference>
<dbReference type="GeneID" id="20303"/>
<dbReference type="KEGG" id="mmu:20303"/>
<dbReference type="UCSC" id="uc007kpp.1">
    <property type="organism name" value="mouse"/>
</dbReference>
<dbReference type="AGR" id="MGI:98261"/>
<dbReference type="CTD" id="6351"/>
<dbReference type="MGI" id="MGI:98261">
    <property type="gene designation" value="Ccl4"/>
</dbReference>
<dbReference type="VEuPathDB" id="HostDB:ENSMUSG00000018930"/>
<dbReference type="eggNOG" id="ENOG502S8M4">
    <property type="taxonomic scope" value="Eukaryota"/>
</dbReference>
<dbReference type="GeneTree" id="ENSGT01100000263482"/>
<dbReference type="HOGENOM" id="CLU_141716_4_2_1"/>
<dbReference type="InParanoid" id="P14097"/>
<dbReference type="OMA" id="IRTSQRC"/>
<dbReference type="OrthoDB" id="9447832at2759"/>
<dbReference type="PhylomeDB" id="P14097"/>
<dbReference type="TreeFam" id="TF334888"/>
<dbReference type="Reactome" id="R-MMU-380108">
    <property type="pathway name" value="Chemokine receptors bind chemokines"/>
</dbReference>
<dbReference type="Reactome" id="R-MMU-418594">
    <property type="pathway name" value="G alpha (i) signalling events"/>
</dbReference>
<dbReference type="BioGRID-ORCS" id="20303">
    <property type="hits" value="5 hits in 78 CRISPR screens"/>
</dbReference>
<dbReference type="PRO" id="PR:P14097"/>
<dbReference type="Proteomes" id="UP000000589">
    <property type="component" value="Chromosome 11"/>
</dbReference>
<dbReference type="RNAct" id="P14097">
    <property type="molecule type" value="protein"/>
</dbReference>
<dbReference type="Bgee" id="ENSMUSG00000018930">
    <property type="expression patterns" value="Expressed in granulocyte and 54 other cell types or tissues"/>
</dbReference>
<dbReference type="ExpressionAtlas" id="P14097">
    <property type="expression patterns" value="baseline and differential"/>
</dbReference>
<dbReference type="GO" id="GO:0005615">
    <property type="term" value="C:extracellular space"/>
    <property type="evidence" value="ECO:0000314"/>
    <property type="project" value="MGI"/>
</dbReference>
<dbReference type="GO" id="GO:0008009">
    <property type="term" value="F:chemokine activity"/>
    <property type="evidence" value="ECO:0007669"/>
    <property type="project" value="InterPro"/>
</dbReference>
<dbReference type="GO" id="GO:0071466">
    <property type="term" value="P:cellular response to xenobiotic stimulus"/>
    <property type="evidence" value="ECO:0000314"/>
    <property type="project" value="MGI"/>
</dbReference>
<dbReference type="GO" id="GO:0006955">
    <property type="term" value="P:immune response"/>
    <property type="evidence" value="ECO:0007669"/>
    <property type="project" value="InterPro"/>
</dbReference>
<dbReference type="GO" id="GO:0006954">
    <property type="term" value="P:inflammatory response"/>
    <property type="evidence" value="ECO:0007669"/>
    <property type="project" value="UniProtKB-KW"/>
</dbReference>
<dbReference type="CDD" id="cd00272">
    <property type="entry name" value="Chemokine_CC"/>
    <property type="match status" value="1"/>
</dbReference>
<dbReference type="FunFam" id="2.40.50.40:FF:000002">
    <property type="entry name" value="C-C motif chemokine"/>
    <property type="match status" value="1"/>
</dbReference>
<dbReference type="Gene3D" id="2.40.50.40">
    <property type="match status" value="1"/>
</dbReference>
<dbReference type="InterPro" id="IPR039809">
    <property type="entry name" value="Chemokine_b/g/d"/>
</dbReference>
<dbReference type="InterPro" id="IPR000827">
    <property type="entry name" value="Chemokine_CC_CS"/>
</dbReference>
<dbReference type="InterPro" id="IPR001811">
    <property type="entry name" value="Chemokine_IL8-like_dom"/>
</dbReference>
<dbReference type="InterPro" id="IPR036048">
    <property type="entry name" value="Interleukin_8-like_sf"/>
</dbReference>
<dbReference type="PANTHER" id="PTHR12015:SF103">
    <property type="entry name" value="C-C MOTIF CHEMOKINE 4-RELATED"/>
    <property type="match status" value="1"/>
</dbReference>
<dbReference type="PANTHER" id="PTHR12015">
    <property type="entry name" value="SMALL INDUCIBLE CYTOKINE A"/>
    <property type="match status" value="1"/>
</dbReference>
<dbReference type="Pfam" id="PF00048">
    <property type="entry name" value="IL8"/>
    <property type="match status" value="1"/>
</dbReference>
<dbReference type="SMART" id="SM00199">
    <property type="entry name" value="SCY"/>
    <property type="match status" value="1"/>
</dbReference>
<dbReference type="SUPFAM" id="SSF54117">
    <property type="entry name" value="Interleukin 8-like chemokines"/>
    <property type="match status" value="1"/>
</dbReference>
<dbReference type="PROSITE" id="PS00472">
    <property type="entry name" value="SMALL_CYTOKINES_CC"/>
    <property type="match status" value="1"/>
</dbReference>
<keyword id="KW-0145">Chemotaxis</keyword>
<keyword id="KW-0202">Cytokine</keyword>
<keyword id="KW-1015">Disulfide bond</keyword>
<keyword id="KW-0395">Inflammatory response</keyword>
<keyword id="KW-1185">Reference proteome</keyword>
<keyword id="KW-0964">Secreted</keyword>
<keyword id="KW-0732">Signal</keyword>
<accession>P14097</accession>
<comment type="function">
    <text>Monokine with inflammatory and chemokinetic properties.</text>
</comment>
<comment type="subunit">
    <text evidence="1">Homodimer.</text>
</comment>
<comment type="subcellular location">
    <subcellularLocation>
        <location>Secreted</location>
    </subcellularLocation>
</comment>
<comment type="similarity">
    <text evidence="2">Belongs to the intercrine beta (chemokine CC) family.</text>
</comment>